<sequence length="61" mass="7222">MGKTGSVTWVKIKKRNSNEYRLVPTKWQDYKKPGPNQKYTSDGKKRRRIRRSQKSILGVRS</sequence>
<keyword id="KW-1185">Reference proteome</keyword>
<reference key="1">
    <citation type="journal article" date="1997" name="Nature">
        <title>The complete genome sequence of the hyperthermophilic, sulphate-reducing archaeon Archaeoglobus fulgidus.</title>
        <authorList>
            <person name="Klenk H.-P."/>
            <person name="Clayton R.A."/>
            <person name="Tomb J.-F."/>
            <person name="White O."/>
            <person name="Nelson K.E."/>
            <person name="Ketchum K.A."/>
            <person name="Dodson R.J."/>
            <person name="Gwinn M.L."/>
            <person name="Hickey E.K."/>
            <person name="Peterson J.D."/>
            <person name="Richardson D.L."/>
            <person name="Kerlavage A.R."/>
            <person name="Graham D.E."/>
            <person name="Kyrpides N.C."/>
            <person name="Fleischmann R.D."/>
            <person name="Quackenbush J."/>
            <person name="Lee N.H."/>
            <person name="Sutton G.G."/>
            <person name="Gill S.R."/>
            <person name="Kirkness E.F."/>
            <person name="Dougherty B.A."/>
            <person name="McKenney K."/>
            <person name="Adams M.D."/>
            <person name="Loftus B.J."/>
            <person name="Peterson S.N."/>
            <person name="Reich C.I."/>
            <person name="McNeil L.K."/>
            <person name="Badger J.H."/>
            <person name="Glodek A."/>
            <person name="Zhou L."/>
            <person name="Overbeek R."/>
            <person name="Gocayne J.D."/>
            <person name="Weidman J.F."/>
            <person name="McDonald L.A."/>
            <person name="Utterback T.R."/>
            <person name="Cotton M.D."/>
            <person name="Spriggs T."/>
            <person name="Artiach P."/>
            <person name="Kaine B.P."/>
            <person name="Sykes S.M."/>
            <person name="Sadow P.W."/>
            <person name="D'Andrea K.P."/>
            <person name="Bowman C."/>
            <person name="Fujii C."/>
            <person name="Garland S.A."/>
            <person name="Mason T.M."/>
            <person name="Olsen G.J."/>
            <person name="Fraser C.M."/>
            <person name="Smith H.O."/>
            <person name="Woese C.R."/>
            <person name="Venter J.C."/>
        </authorList>
    </citation>
    <scope>NUCLEOTIDE SEQUENCE [LARGE SCALE GENOMIC DNA]</scope>
    <source>
        <strain>ATCC 49558 / DSM 4304 / JCM 9628 / NBRC 100126 / VC-16</strain>
    </source>
</reference>
<name>Y2193_ARCFU</name>
<dbReference type="EMBL" id="AE000782">
    <property type="protein sequence ID" value="AAB89078.1"/>
    <property type="molecule type" value="Genomic_DNA"/>
</dbReference>
<dbReference type="PIR" id="A69524">
    <property type="entry name" value="A69524"/>
</dbReference>
<dbReference type="RefSeq" id="WP_010879682.1">
    <property type="nucleotide sequence ID" value="NC_000917.1"/>
</dbReference>
<dbReference type="SMR" id="O28090"/>
<dbReference type="STRING" id="224325.AF_2193"/>
<dbReference type="PaxDb" id="224325-AF_2193"/>
<dbReference type="EnsemblBacteria" id="AAB89078">
    <property type="protein sequence ID" value="AAB89078"/>
    <property type="gene ID" value="AF_2193"/>
</dbReference>
<dbReference type="KEGG" id="afu:AF_2193"/>
<dbReference type="eggNOG" id="arCOG04481">
    <property type="taxonomic scope" value="Archaea"/>
</dbReference>
<dbReference type="HOGENOM" id="CLU_2968462_0_0_2"/>
<dbReference type="OrthoDB" id="51559at2157"/>
<dbReference type="Proteomes" id="UP000002199">
    <property type="component" value="Chromosome"/>
</dbReference>
<dbReference type="InterPro" id="IPR035258">
    <property type="entry name" value="DUF5350"/>
</dbReference>
<dbReference type="Pfam" id="PF17299">
    <property type="entry name" value="DUF5350"/>
    <property type="match status" value="1"/>
</dbReference>
<evidence type="ECO:0000256" key="1">
    <source>
        <dbReference type="SAM" id="MobiDB-lite"/>
    </source>
</evidence>
<protein>
    <recommendedName>
        <fullName>Uncharacterized protein AF_2193</fullName>
    </recommendedName>
</protein>
<organism>
    <name type="scientific">Archaeoglobus fulgidus (strain ATCC 49558 / DSM 4304 / JCM 9628 / NBRC 100126 / VC-16)</name>
    <dbReference type="NCBI Taxonomy" id="224325"/>
    <lineage>
        <taxon>Archaea</taxon>
        <taxon>Methanobacteriati</taxon>
        <taxon>Methanobacteriota</taxon>
        <taxon>Archaeoglobi</taxon>
        <taxon>Archaeoglobales</taxon>
        <taxon>Archaeoglobaceae</taxon>
        <taxon>Archaeoglobus</taxon>
    </lineage>
</organism>
<accession>O28090</accession>
<gene>
    <name type="ordered locus">AF_2193</name>
</gene>
<proteinExistence type="predicted"/>
<feature type="chain" id="PRO_0000128118" description="Uncharacterized protein AF_2193">
    <location>
        <begin position="1"/>
        <end position="61"/>
    </location>
</feature>
<feature type="region of interest" description="Disordered" evidence="1">
    <location>
        <begin position="23"/>
        <end position="61"/>
    </location>
</feature>
<feature type="compositionally biased region" description="Basic residues" evidence="1">
    <location>
        <begin position="44"/>
        <end position="53"/>
    </location>
</feature>